<organism>
    <name type="scientific">Bacillus cereus (strain AH187)</name>
    <dbReference type="NCBI Taxonomy" id="405534"/>
    <lineage>
        <taxon>Bacteria</taxon>
        <taxon>Bacillati</taxon>
        <taxon>Bacillota</taxon>
        <taxon>Bacilli</taxon>
        <taxon>Bacillales</taxon>
        <taxon>Bacillaceae</taxon>
        <taxon>Bacillus</taxon>
        <taxon>Bacillus cereus group</taxon>
    </lineage>
</organism>
<reference key="1">
    <citation type="submission" date="2008-10" db="EMBL/GenBank/DDBJ databases">
        <title>Genome sequence of Bacillus cereus AH187.</title>
        <authorList>
            <person name="Dodson R.J."/>
            <person name="Durkin A.S."/>
            <person name="Rosovitz M.J."/>
            <person name="Rasko D.A."/>
            <person name="Kolsto A.B."/>
            <person name="Okstad O.A."/>
            <person name="Ravel J."/>
            <person name="Sutton G."/>
        </authorList>
    </citation>
    <scope>NUCLEOTIDE SEQUENCE [LARGE SCALE GENOMIC DNA]</scope>
    <source>
        <strain>AH187</strain>
    </source>
</reference>
<protein>
    <recommendedName>
        <fullName evidence="1">Glycerol kinase</fullName>
        <ecNumber evidence="1">2.7.1.30</ecNumber>
    </recommendedName>
    <alternativeName>
        <fullName evidence="1">ATP:glycerol 3-phosphotransferase</fullName>
    </alternativeName>
    <alternativeName>
        <fullName evidence="1">Glycerokinase</fullName>
        <shortName evidence="1">GK</shortName>
    </alternativeName>
</protein>
<comment type="function">
    <text evidence="1">Key enzyme in the regulation of glycerol uptake and metabolism. Catalyzes the phosphorylation of glycerol to yield sn-glycerol 3-phosphate.</text>
</comment>
<comment type="catalytic activity">
    <reaction evidence="1">
        <text>glycerol + ATP = sn-glycerol 3-phosphate + ADP + H(+)</text>
        <dbReference type="Rhea" id="RHEA:21644"/>
        <dbReference type="ChEBI" id="CHEBI:15378"/>
        <dbReference type="ChEBI" id="CHEBI:17754"/>
        <dbReference type="ChEBI" id="CHEBI:30616"/>
        <dbReference type="ChEBI" id="CHEBI:57597"/>
        <dbReference type="ChEBI" id="CHEBI:456216"/>
        <dbReference type="EC" id="2.7.1.30"/>
    </reaction>
</comment>
<comment type="activity regulation">
    <text evidence="1">Activated by phosphorylation and inhibited by fructose 1,6-bisphosphate (FBP).</text>
</comment>
<comment type="pathway">
    <text evidence="1">Polyol metabolism; glycerol degradation via glycerol kinase pathway; sn-glycerol 3-phosphate from glycerol: step 1/1.</text>
</comment>
<comment type="subunit">
    <text evidence="1">Homotetramer and homodimer (in equilibrium).</text>
</comment>
<comment type="PTM">
    <text evidence="1">The phosphoenolpyruvate-dependent sugar phosphotransferase system (PTS), including enzyme I, and histidine-containing protein (HPr) are required for the phosphorylation, which leads to the activation of the enzyme.</text>
</comment>
<comment type="similarity">
    <text evidence="1">Belongs to the FGGY kinase family.</text>
</comment>
<gene>
    <name evidence="1" type="primary">glpK</name>
    <name type="ordered locus">BCAH187_A1195</name>
</gene>
<name>GLPK_BACC7</name>
<evidence type="ECO:0000255" key="1">
    <source>
        <dbReference type="HAMAP-Rule" id="MF_00186"/>
    </source>
</evidence>
<sequence>MKKYILSLDQGTTSSRAILFNKKGEIVHSAQKEFTQHFPKPGWVEHNAQEIWGSILAVIATCLSEADVKPEQIAGIGITNQRETAVVWDKTTGKPIYNAIVWQSRQTAEICDELKEKGYSEMVREKTGLLIDAYFSGTKVKWILDNVEGAREKAENGDLLFGTIDTWLVWKLSGGKAHVTDYSNASRTLMFNIHDLQWDDELLDMLTVPKSMLPEVRPSSEVYGETIDYHFFGQNVPIAGVAGDQQAALFGQACFGEGMAKNTYGTGCFMLMNTGEKAVASEHGLLTTIAWGIDGKVNYALEGSIFVAGSAIQWLRDGMRMFKDASESEVYASRVESTDGVYVVPAFVGLGTPYWDSEVRGAMFGVTRGTTKEHFIRATLESLAYQTKDVLCAMEADSGIELKTLRVDGGAVKNNFLMKFQSDILDVPVERPVINETTALGAAYLAGLAVGYWKNQDEIKEQWHMDKRFEPTMEAETSEELYAGWKKAIEATKAFK</sequence>
<proteinExistence type="inferred from homology"/>
<dbReference type="EC" id="2.7.1.30" evidence="1"/>
<dbReference type="EMBL" id="CP001177">
    <property type="protein sequence ID" value="ACJ79619.1"/>
    <property type="molecule type" value="Genomic_DNA"/>
</dbReference>
<dbReference type="SMR" id="B7HYU3"/>
<dbReference type="KEGG" id="bcr:BCAH187_A1195"/>
<dbReference type="HOGENOM" id="CLU_009281_2_3_9"/>
<dbReference type="UniPathway" id="UPA00618">
    <property type="reaction ID" value="UER00672"/>
</dbReference>
<dbReference type="Proteomes" id="UP000002214">
    <property type="component" value="Chromosome"/>
</dbReference>
<dbReference type="GO" id="GO:0005829">
    <property type="term" value="C:cytosol"/>
    <property type="evidence" value="ECO:0007669"/>
    <property type="project" value="TreeGrafter"/>
</dbReference>
<dbReference type="GO" id="GO:0005524">
    <property type="term" value="F:ATP binding"/>
    <property type="evidence" value="ECO:0007669"/>
    <property type="project" value="UniProtKB-UniRule"/>
</dbReference>
<dbReference type="GO" id="GO:0004370">
    <property type="term" value="F:glycerol kinase activity"/>
    <property type="evidence" value="ECO:0000250"/>
    <property type="project" value="UniProtKB"/>
</dbReference>
<dbReference type="GO" id="GO:0019563">
    <property type="term" value="P:glycerol catabolic process"/>
    <property type="evidence" value="ECO:0007669"/>
    <property type="project" value="UniProtKB-UniRule"/>
</dbReference>
<dbReference type="GO" id="GO:0006071">
    <property type="term" value="P:glycerol metabolic process"/>
    <property type="evidence" value="ECO:0000250"/>
    <property type="project" value="UniProtKB"/>
</dbReference>
<dbReference type="GO" id="GO:0006072">
    <property type="term" value="P:glycerol-3-phosphate metabolic process"/>
    <property type="evidence" value="ECO:0007669"/>
    <property type="project" value="InterPro"/>
</dbReference>
<dbReference type="CDD" id="cd07786">
    <property type="entry name" value="FGGY_EcGK_like"/>
    <property type="match status" value="1"/>
</dbReference>
<dbReference type="FunFam" id="3.30.420.40:FF:000007">
    <property type="entry name" value="Glycerol kinase"/>
    <property type="match status" value="1"/>
</dbReference>
<dbReference type="FunFam" id="3.30.420.40:FF:000008">
    <property type="entry name" value="Glycerol kinase"/>
    <property type="match status" value="1"/>
</dbReference>
<dbReference type="Gene3D" id="3.30.420.40">
    <property type="match status" value="2"/>
</dbReference>
<dbReference type="HAMAP" id="MF_00186">
    <property type="entry name" value="Glycerol_kin"/>
    <property type="match status" value="1"/>
</dbReference>
<dbReference type="InterPro" id="IPR043129">
    <property type="entry name" value="ATPase_NBD"/>
</dbReference>
<dbReference type="InterPro" id="IPR000577">
    <property type="entry name" value="Carb_kinase_FGGY"/>
</dbReference>
<dbReference type="InterPro" id="IPR018483">
    <property type="entry name" value="Carb_kinase_FGGY_CS"/>
</dbReference>
<dbReference type="InterPro" id="IPR018485">
    <property type="entry name" value="FGGY_C"/>
</dbReference>
<dbReference type="InterPro" id="IPR018484">
    <property type="entry name" value="FGGY_N"/>
</dbReference>
<dbReference type="InterPro" id="IPR005999">
    <property type="entry name" value="Glycerol_kin"/>
</dbReference>
<dbReference type="NCBIfam" id="TIGR01311">
    <property type="entry name" value="glycerol_kin"/>
    <property type="match status" value="1"/>
</dbReference>
<dbReference type="NCBIfam" id="NF000756">
    <property type="entry name" value="PRK00047.1"/>
    <property type="match status" value="1"/>
</dbReference>
<dbReference type="PANTHER" id="PTHR10196:SF69">
    <property type="entry name" value="GLYCEROL KINASE"/>
    <property type="match status" value="1"/>
</dbReference>
<dbReference type="PANTHER" id="PTHR10196">
    <property type="entry name" value="SUGAR KINASE"/>
    <property type="match status" value="1"/>
</dbReference>
<dbReference type="Pfam" id="PF02782">
    <property type="entry name" value="FGGY_C"/>
    <property type="match status" value="1"/>
</dbReference>
<dbReference type="Pfam" id="PF00370">
    <property type="entry name" value="FGGY_N"/>
    <property type="match status" value="1"/>
</dbReference>
<dbReference type="PIRSF" id="PIRSF000538">
    <property type="entry name" value="GlpK"/>
    <property type="match status" value="1"/>
</dbReference>
<dbReference type="SUPFAM" id="SSF53067">
    <property type="entry name" value="Actin-like ATPase domain"/>
    <property type="match status" value="2"/>
</dbReference>
<dbReference type="PROSITE" id="PS00933">
    <property type="entry name" value="FGGY_KINASES_1"/>
    <property type="match status" value="1"/>
</dbReference>
<dbReference type="PROSITE" id="PS00445">
    <property type="entry name" value="FGGY_KINASES_2"/>
    <property type="match status" value="1"/>
</dbReference>
<keyword id="KW-0067">ATP-binding</keyword>
<keyword id="KW-0319">Glycerol metabolism</keyword>
<keyword id="KW-0418">Kinase</keyword>
<keyword id="KW-0547">Nucleotide-binding</keyword>
<keyword id="KW-0597">Phosphoprotein</keyword>
<keyword id="KW-0808">Transferase</keyword>
<accession>B7HYU3</accession>
<feature type="chain" id="PRO_1000118545" description="Glycerol kinase">
    <location>
        <begin position="1"/>
        <end position="496"/>
    </location>
</feature>
<feature type="binding site" evidence="1">
    <location>
        <position position="12"/>
    </location>
    <ligand>
        <name>ADP</name>
        <dbReference type="ChEBI" id="CHEBI:456216"/>
    </ligand>
</feature>
<feature type="binding site" evidence="1">
    <location>
        <position position="12"/>
    </location>
    <ligand>
        <name>ATP</name>
        <dbReference type="ChEBI" id="CHEBI:30616"/>
    </ligand>
</feature>
<feature type="binding site" evidence="1">
    <location>
        <position position="12"/>
    </location>
    <ligand>
        <name>sn-glycerol 3-phosphate</name>
        <dbReference type="ChEBI" id="CHEBI:57597"/>
    </ligand>
</feature>
<feature type="binding site" evidence="1">
    <location>
        <position position="13"/>
    </location>
    <ligand>
        <name>ATP</name>
        <dbReference type="ChEBI" id="CHEBI:30616"/>
    </ligand>
</feature>
<feature type="binding site" evidence="1">
    <location>
        <position position="14"/>
    </location>
    <ligand>
        <name>ATP</name>
        <dbReference type="ChEBI" id="CHEBI:30616"/>
    </ligand>
</feature>
<feature type="binding site" evidence="1">
    <location>
        <position position="16"/>
    </location>
    <ligand>
        <name>ADP</name>
        <dbReference type="ChEBI" id="CHEBI:456216"/>
    </ligand>
</feature>
<feature type="binding site" evidence="1">
    <location>
        <position position="82"/>
    </location>
    <ligand>
        <name>glycerol</name>
        <dbReference type="ChEBI" id="CHEBI:17754"/>
    </ligand>
</feature>
<feature type="binding site" evidence="1">
    <location>
        <position position="82"/>
    </location>
    <ligand>
        <name>sn-glycerol 3-phosphate</name>
        <dbReference type="ChEBI" id="CHEBI:57597"/>
    </ligand>
</feature>
<feature type="binding site" evidence="1">
    <location>
        <position position="83"/>
    </location>
    <ligand>
        <name>glycerol</name>
        <dbReference type="ChEBI" id="CHEBI:17754"/>
    </ligand>
</feature>
<feature type="binding site" evidence="1">
    <location>
        <position position="83"/>
    </location>
    <ligand>
        <name>sn-glycerol 3-phosphate</name>
        <dbReference type="ChEBI" id="CHEBI:57597"/>
    </ligand>
</feature>
<feature type="binding site" evidence="1">
    <location>
        <position position="134"/>
    </location>
    <ligand>
        <name>glycerol</name>
        <dbReference type="ChEBI" id="CHEBI:17754"/>
    </ligand>
</feature>
<feature type="binding site" evidence="1">
    <location>
        <position position="134"/>
    </location>
    <ligand>
        <name>sn-glycerol 3-phosphate</name>
        <dbReference type="ChEBI" id="CHEBI:57597"/>
    </ligand>
</feature>
<feature type="binding site" evidence="1">
    <location>
        <position position="244"/>
    </location>
    <ligand>
        <name>glycerol</name>
        <dbReference type="ChEBI" id="CHEBI:17754"/>
    </ligand>
</feature>
<feature type="binding site" evidence="1">
    <location>
        <position position="244"/>
    </location>
    <ligand>
        <name>sn-glycerol 3-phosphate</name>
        <dbReference type="ChEBI" id="CHEBI:57597"/>
    </ligand>
</feature>
<feature type="binding site" evidence="1">
    <location>
        <position position="245"/>
    </location>
    <ligand>
        <name>glycerol</name>
        <dbReference type="ChEBI" id="CHEBI:17754"/>
    </ligand>
</feature>
<feature type="binding site" evidence="1">
    <location>
        <position position="266"/>
    </location>
    <ligand>
        <name>ADP</name>
        <dbReference type="ChEBI" id="CHEBI:456216"/>
    </ligand>
</feature>
<feature type="binding site" evidence="1">
    <location>
        <position position="266"/>
    </location>
    <ligand>
        <name>ATP</name>
        <dbReference type="ChEBI" id="CHEBI:30616"/>
    </ligand>
</feature>
<feature type="binding site" evidence="1">
    <location>
        <position position="309"/>
    </location>
    <ligand>
        <name>ADP</name>
        <dbReference type="ChEBI" id="CHEBI:456216"/>
    </ligand>
</feature>
<feature type="binding site" evidence="1">
    <location>
        <position position="309"/>
    </location>
    <ligand>
        <name>ATP</name>
        <dbReference type="ChEBI" id="CHEBI:30616"/>
    </ligand>
</feature>
<feature type="binding site" evidence="1">
    <location>
        <position position="313"/>
    </location>
    <ligand>
        <name>ATP</name>
        <dbReference type="ChEBI" id="CHEBI:30616"/>
    </ligand>
</feature>
<feature type="binding site" evidence="1">
    <location>
        <position position="410"/>
    </location>
    <ligand>
        <name>ADP</name>
        <dbReference type="ChEBI" id="CHEBI:456216"/>
    </ligand>
</feature>
<feature type="binding site" evidence="1">
    <location>
        <position position="410"/>
    </location>
    <ligand>
        <name>ATP</name>
        <dbReference type="ChEBI" id="CHEBI:30616"/>
    </ligand>
</feature>
<feature type="binding site" evidence="1">
    <location>
        <position position="414"/>
    </location>
    <ligand>
        <name>ADP</name>
        <dbReference type="ChEBI" id="CHEBI:456216"/>
    </ligand>
</feature>
<feature type="modified residue" description="Phosphohistidine; by HPr" evidence="1">
    <location>
        <position position="230"/>
    </location>
</feature>